<name>ATPB1_BURMA</name>
<protein>
    <recommendedName>
        <fullName evidence="1">ATP synthase subunit beta 1</fullName>
        <ecNumber evidence="1">7.1.2.2</ecNumber>
    </recommendedName>
    <alternativeName>
        <fullName evidence="1">ATP synthase F1 sector subunit beta 1</fullName>
    </alternativeName>
    <alternativeName>
        <fullName evidence="1">F-ATPase subunit beta 1</fullName>
    </alternativeName>
</protein>
<proteinExistence type="inferred from homology"/>
<accession>Q62FR5</accession>
<comment type="function">
    <text evidence="1">Produces ATP from ADP in the presence of a proton gradient across the membrane. The catalytic sites are hosted primarily by the beta subunits.</text>
</comment>
<comment type="catalytic activity">
    <reaction evidence="1">
        <text>ATP + H2O + 4 H(+)(in) = ADP + phosphate + 5 H(+)(out)</text>
        <dbReference type="Rhea" id="RHEA:57720"/>
        <dbReference type="ChEBI" id="CHEBI:15377"/>
        <dbReference type="ChEBI" id="CHEBI:15378"/>
        <dbReference type="ChEBI" id="CHEBI:30616"/>
        <dbReference type="ChEBI" id="CHEBI:43474"/>
        <dbReference type="ChEBI" id="CHEBI:456216"/>
        <dbReference type="EC" id="7.1.2.2"/>
    </reaction>
</comment>
<comment type="subunit">
    <text evidence="1">F-type ATPases have 2 components, CF(1) - the catalytic core - and CF(0) - the membrane proton channel. CF(1) has five subunits: alpha(3), beta(3), gamma(1), delta(1), epsilon(1). CF(0) has three main subunits: a(1), b(2) and c(9-12). The alpha and beta chains form an alternating ring which encloses part of the gamma chain. CF(1) is attached to CF(0) by a central stalk formed by the gamma and epsilon chains, while a peripheral stalk is formed by the delta and b chains.</text>
</comment>
<comment type="subcellular location">
    <subcellularLocation>
        <location evidence="1">Cell inner membrane</location>
        <topology evidence="1">Peripheral membrane protein</topology>
    </subcellularLocation>
</comment>
<comment type="similarity">
    <text evidence="1">Belongs to the ATPase alpha/beta chains family.</text>
</comment>
<dbReference type="EC" id="7.1.2.2" evidence="1"/>
<dbReference type="EMBL" id="CP000010">
    <property type="protein sequence ID" value="AAU48032.1"/>
    <property type="molecule type" value="Genomic_DNA"/>
</dbReference>
<dbReference type="RefSeq" id="YP_104462.1">
    <property type="nucleotide sequence ID" value="NC_006348.1"/>
</dbReference>
<dbReference type="SMR" id="Q62FR5"/>
<dbReference type="KEGG" id="bma:BMA2957"/>
<dbReference type="PATRIC" id="fig|243160.12.peg.3026"/>
<dbReference type="eggNOG" id="COG0055">
    <property type="taxonomic scope" value="Bacteria"/>
</dbReference>
<dbReference type="HOGENOM" id="CLU_022398_0_2_4"/>
<dbReference type="Proteomes" id="UP000006693">
    <property type="component" value="Chromosome 1"/>
</dbReference>
<dbReference type="GO" id="GO:0005886">
    <property type="term" value="C:plasma membrane"/>
    <property type="evidence" value="ECO:0007669"/>
    <property type="project" value="UniProtKB-SubCell"/>
</dbReference>
<dbReference type="GO" id="GO:0045259">
    <property type="term" value="C:proton-transporting ATP synthase complex"/>
    <property type="evidence" value="ECO:0007669"/>
    <property type="project" value="UniProtKB-KW"/>
</dbReference>
<dbReference type="GO" id="GO:0005524">
    <property type="term" value="F:ATP binding"/>
    <property type="evidence" value="ECO:0007669"/>
    <property type="project" value="UniProtKB-UniRule"/>
</dbReference>
<dbReference type="GO" id="GO:0016887">
    <property type="term" value="F:ATP hydrolysis activity"/>
    <property type="evidence" value="ECO:0007669"/>
    <property type="project" value="InterPro"/>
</dbReference>
<dbReference type="GO" id="GO:0046933">
    <property type="term" value="F:proton-transporting ATP synthase activity, rotational mechanism"/>
    <property type="evidence" value="ECO:0007669"/>
    <property type="project" value="UniProtKB-UniRule"/>
</dbReference>
<dbReference type="CDD" id="cd18110">
    <property type="entry name" value="ATP-synt_F1_beta_C"/>
    <property type="match status" value="1"/>
</dbReference>
<dbReference type="CDD" id="cd18115">
    <property type="entry name" value="ATP-synt_F1_beta_N"/>
    <property type="match status" value="1"/>
</dbReference>
<dbReference type="CDD" id="cd01133">
    <property type="entry name" value="F1-ATPase_beta_CD"/>
    <property type="match status" value="1"/>
</dbReference>
<dbReference type="FunFam" id="1.10.1140.10:FF:000001">
    <property type="entry name" value="ATP synthase subunit beta"/>
    <property type="match status" value="1"/>
</dbReference>
<dbReference type="FunFam" id="3.40.50.300:FF:000004">
    <property type="entry name" value="ATP synthase subunit beta"/>
    <property type="match status" value="1"/>
</dbReference>
<dbReference type="Gene3D" id="2.40.10.170">
    <property type="match status" value="1"/>
</dbReference>
<dbReference type="Gene3D" id="1.10.1140.10">
    <property type="entry name" value="Bovine Mitochondrial F1-atpase, Atp Synthase Beta Chain, Chain D, domain 3"/>
    <property type="match status" value="1"/>
</dbReference>
<dbReference type="Gene3D" id="3.40.50.300">
    <property type="entry name" value="P-loop containing nucleotide triphosphate hydrolases"/>
    <property type="match status" value="1"/>
</dbReference>
<dbReference type="HAMAP" id="MF_01347">
    <property type="entry name" value="ATP_synth_beta_bact"/>
    <property type="match status" value="1"/>
</dbReference>
<dbReference type="InterPro" id="IPR003593">
    <property type="entry name" value="AAA+_ATPase"/>
</dbReference>
<dbReference type="InterPro" id="IPR055190">
    <property type="entry name" value="ATP-synt_VA_C"/>
</dbReference>
<dbReference type="InterPro" id="IPR005722">
    <property type="entry name" value="ATP_synth_F1_bsu"/>
</dbReference>
<dbReference type="InterPro" id="IPR020003">
    <property type="entry name" value="ATPase_a/bsu_AS"/>
</dbReference>
<dbReference type="InterPro" id="IPR050053">
    <property type="entry name" value="ATPase_alpha/beta_chains"/>
</dbReference>
<dbReference type="InterPro" id="IPR004100">
    <property type="entry name" value="ATPase_F1/V1/A1_a/bsu_N"/>
</dbReference>
<dbReference type="InterPro" id="IPR036121">
    <property type="entry name" value="ATPase_F1/V1/A1_a/bsu_N_sf"/>
</dbReference>
<dbReference type="InterPro" id="IPR000194">
    <property type="entry name" value="ATPase_F1/V1/A1_a/bsu_nucl-bd"/>
</dbReference>
<dbReference type="InterPro" id="IPR024034">
    <property type="entry name" value="ATPase_F1/V1_b/a_C"/>
</dbReference>
<dbReference type="InterPro" id="IPR027417">
    <property type="entry name" value="P-loop_NTPase"/>
</dbReference>
<dbReference type="NCBIfam" id="TIGR01039">
    <property type="entry name" value="atpD"/>
    <property type="match status" value="1"/>
</dbReference>
<dbReference type="PANTHER" id="PTHR15184">
    <property type="entry name" value="ATP SYNTHASE"/>
    <property type="match status" value="1"/>
</dbReference>
<dbReference type="PANTHER" id="PTHR15184:SF71">
    <property type="entry name" value="ATP SYNTHASE SUBUNIT BETA, MITOCHONDRIAL"/>
    <property type="match status" value="1"/>
</dbReference>
<dbReference type="Pfam" id="PF00006">
    <property type="entry name" value="ATP-synt_ab"/>
    <property type="match status" value="1"/>
</dbReference>
<dbReference type="Pfam" id="PF02874">
    <property type="entry name" value="ATP-synt_ab_N"/>
    <property type="match status" value="1"/>
</dbReference>
<dbReference type="Pfam" id="PF22919">
    <property type="entry name" value="ATP-synt_VA_C"/>
    <property type="match status" value="1"/>
</dbReference>
<dbReference type="SMART" id="SM00382">
    <property type="entry name" value="AAA"/>
    <property type="match status" value="1"/>
</dbReference>
<dbReference type="SUPFAM" id="SSF47917">
    <property type="entry name" value="C-terminal domain of alpha and beta subunits of F1 ATP synthase"/>
    <property type="match status" value="1"/>
</dbReference>
<dbReference type="SUPFAM" id="SSF50615">
    <property type="entry name" value="N-terminal domain of alpha and beta subunits of F1 ATP synthase"/>
    <property type="match status" value="1"/>
</dbReference>
<dbReference type="SUPFAM" id="SSF52540">
    <property type="entry name" value="P-loop containing nucleoside triphosphate hydrolases"/>
    <property type="match status" value="1"/>
</dbReference>
<dbReference type="PROSITE" id="PS00152">
    <property type="entry name" value="ATPASE_ALPHA_BETA"/>
    <property type="match status" value="1"/>
</dbReference>
<organism>
    <name type="scientific">Burkholderia mallei (strain ATCC 23344)</name>
    <dbReference type="NCBI Taxonomy" id="243160"/>
    <lineage>
        <taxon>Bacteria</taxon>
        <taxon>Pseudomonadati</taxon>
        <taxon>Pseudomonadota</taxon>
        <taxon>Betaproteobacteria</taxon>
        <taxon>Burkholderiales</taxon>
        <taxon>Burkholderiaceae</taxon>
        <taxon>Burkholderia</taxon>
        <taxon>pseudomallei group</taxon>
    </lineage>
</organism>
<keyword id="KW-0066">ATP synthesis</keyword>
<keyword id="KW-0067">ATP-binding</keyword>
<keyword id="KW-0997">Cell inner membrane</keyword>
<keyword id="KW-1003">Cell membrane</keyword>
<keyword id="KW-0139">CF(1)</keyword>
<keyword id="KW-0375">Hydrogen ion transport</keyword>
<keyword id="KW-0406">Ion transport</keyword>
<keyword id="KW-0472">Membrane</keyword>
<keyword id="KW-0547">Nucleotide-binding</keyword>
<keyword id="KW-1185">Reference proteome</keyword>
<keyword id="KW-1278">Translocase</keyword>
<keyword id="KW-0813">Transport</keyword>
<sequence length="464" mass="50623">MSTAALVEGKIVQCIGAVIDVEFPRESMPKIYDALILEGSELTLEVQQQLGDGVVRTICLGASDGLRRGVVVKNTGNPISVPVGKPTLGRIMDVLGRPIDEAGPIESENKRSIHQKAPAFDELSPSTELLETGIKVIDLICPFAKGGKVGLFGGAGVGKTVNMMELINNIAKEHGGYSVFAGVGERTREGNDFYHEMKDSNVLDKVALVYGQMNEPPGNRLRVALTGLTMAEHFRDEGLDVLFFVDNIYRFTLAGTEVSALLGRMPSAVGYQPTLAEEMGKLQERITSTKKGSITSVQAVYVPADDLTDPSPATTFGHLDATVVLSRDIASLGIYPAVDPLDSTSRQIDPNVIGEEHYSITRRVQQTLQRYKELRDIIAILGMDELSPEDKLSVARARKIQRFLSQPFHVAEVFTGSPGKYVPLKETIRGFKMIVDGECDHLPEQAFYMVGTIDEAFEKAKKIQ</sequence>
<feature type="chain" id="PRO_0000254231" description="ATP synthase subunit beta 1">
    <location>
        <begin position="1"/>
        <end position="464"/>
    </location>
</feature>
<feature type="binding site" evidence="1">
    <location>
        <begin position="153"/>
        <end position="160"/>
    </location>
    <ligand>
        <name>ATP</name>
        <dbReference type="ChEBI" id="CHEBI:30616"/>
    </ligand>
</feature>
<evidence type="ECO:0000255" key="1">
    <source>
        <dbReference type="HAMAP-Rule" id="MF_01347"/>
    </source>
</evidence>
<reference key="1">
    <citation type="journal article" date="2004" name="Proc. Natl. Acad. Sci. U.S.A.">
        <title>Structural flexibility in the Burkholderia mallei genome.</title>
        <authorList>
            <person name="Nierman W.C."/>
            <person name="DeShazer D."/>
            <person name="Kim H.S."/>
            <person name="Tettelin H."/>
            <person name="Nelson K.E."/>
            <person name="Feldblyum T.V."/>
            <person name="Ulrich R.L."/>
            <person name="Ronning C.M."/>
            <person name="Brinkac L.M."/>
            <person name="Daugherty S.C."/>
            <person name="Davidsen T.D."/>
            <person name="DeBoy R.T."/>
            <person name="Dimitrov G."/>
            <person name="Dodson R.J."/>
            <person name="Durkin A.S."/>
            <person name="Gwinn M.L."/>
            <person name="Haft D.H."/>
            <person name="Khouri H.M."/>
            <person name="Kolonay J.F."/>
            <person name="Madupu R."/>
            <person name="Mohammoud Y."/>
            <person name="Nelson W.C."/>
            <person name="Radune D."/>
            <person name="Romero C.M."/>
            <person name="Sarria S."/>
            <person name="Selengut J."/>
            <person name="Shamblin C."/>
            <person name="Sullivan S.A."/>
            <person name="White O."/>
            <person name="Yu Y."/>
            <person name="Zafar N."/>
            <person name="Zhou L."/>
            <person name="Fraser C.M."/>
        </authorList>
    </citation>
    <scope>NUCLEOTIDE SEQUENCE [LARGE SCALE GENOMIC DNA]</scope>
    <source>
        <strain>ATCC 23344</strain>
    </source>
</reference>
<gene>
    <name evidence="1" type="primary">atpD1</name>
    <name type="ordered locus">BMA2957</name>
</gene>